<dbReference type="EMBL" id="BC109499">
    <property type="protein sequence ID" value="AAI09500.1"/>
    <property type="molecule type" value="mRNA"/>
</dbReference>
<dbReference type="RefSeq" id="NP_001035641.1">
    <property type="nucleotide sequence ID" value="NM_001040551.2"/>
</dbReference>
<dbReference type="SMR" id="Q32LN3"/>
<dbReference type="FunCoup" id="Q32LN3">
    <property type="interactions" value="1224"/>
</dbReference>
<dbReference type="STRING" id="9913.ENSBTAP00000073283"/>
<dbReference type="PaxDb" id="9913-ENSBTAP00000050551"/>
<dbReference type="Ensembl" id="ENSBTAT00000055488.2">
    <property type="protein sequence ID" value="ENSBTAP00000050551.1"/>
    <property type="gene ID" value="ENSBTAG00000001772.7"/>
</dbReference>
<dbReference type="GeneID" id="531753"/>
<dbReference type="KEGG" id="bta:531753"/>
<dbReference type="CTD" id="132954"/>
<dbReference type="VEuPathDB" id="HostDB:ENSBTAG00000001772"/>
<dbReference type="VGNC" id="VGNC:32666">
    <property type="gene designation" value="PDCL2"/>
</dbReference>
<dbReference type="eggNOG" id="KOG3170">
    <property type="taxonomic scope" value="Eukaryota"/>
</dbReference>
<dbReference type="GeneTree" id="ENSGT00940000160654"/>
<dbReference type="HOGENOM" id="CLU_072604_0_0_1"/>
<dbReference type="InParanoid" id="Q32LN3"/>
<dbReference type="OrthoDB" id="45518at2759"/>
<dbReference type="TreeFam" id="TF315179"/>
<dbReference type="Proteomes" id="UP000009136">
    <property type="component" value="Chromosome 6"/>
</dbReference>
<dbReference type="Bgee" id="ENSBTAG00000001772">
    <property type="expression patterns" value="Expressed in spermatid and 38 other cell types or tissues"/>
</dbReference>
<dbReference type="GO" id="GO:0005737">
    <property type="term" value="C:cytoplasm"/>
    <property type="evidence" value="ECO:0000318"/>
    <property type="project" value="GO_Central"/>
</dbReference>
<dbReference type="GO" id="GO:0005783">
    <property type="term" value="C:endoplasmic reticulum"/>
    <property type="evidence" value="ECO:0000250"/>
    <property type="project" value="UniProtKB"/>
</dbReference>
<dbReference type="GO" id="GO:0001675">
    <property type="term" value="P:acrosome assembly"/>
    <property type="evidence" value="ECO:0000250"/>
    <property type="project" value="UniProtKB"/>
</dbReference>
<dbReference type="GO" id="GO:0006457">
    <property type="term" value="P:protein folding"/>
    <property type="evidence" value="ECO:0000318"/>
    <property type="project" value="GO_Central"/>
</dbReference>
<dbReference type="GO" id="GO:0007286">
    <property type="term" value="P:spermatid development"/>
    <property type="evidence" value="ECO:0000250"/>
    <property type="project" value="UniProtKB"/>
</dbReference>
<dbReference type="CDD" id="cd02988">
    <property type="entry name" value="Phd_like_VIAF"/>
    <property type="match status" value="1"/>
</dbReference>
<dbReference type="Gene3D" id="3.40.30.10">
    <property type="entry name" value="Glutaredoxin"/>
    <property type="match status" value="1"/>
</dbReference>
<dbReference type="InterPro" id="IPR051498">
    <property type="entry name" value="Phosducin-like_chap/apop_reg"/>
</dbReference>
<dbReference type="InterPro" id="IPR024253">
    <property type="entry name" value="Phosducin_thioredoxin-like_dom"/>
</dbReference>
<dbReference type="InterPro" id="IPR036249">
    <property type="entry name" value="Thioredoxin-like_sf"/>
</dbReference>
<dbReference type="PANTHER" id="PTHR45809:SF1">
    <property type="entry name" value="PHOSDUCIN-LIKE PROTEIN 2"/>
    <property type="match status" value="1"/>
</dbReference>
<dbReference type="PANTHER" id="PTHR45809">
    <property type="entry name" value="VIRAL IAP-ASSOCIATED FACTOR HOMOLOG"/>
    <property type="match status" value="1"/>
</dbReference>
<dbReference type="Pfam" id="PF02114">
    <property type="entry name" value="Phosducin"/>
    <property type="match status" value="1"/>
</dbReference>
<dbReference type="SUPFAM" id="SSF52833">
    <property type="entry name" value="Thioredoxin-like"/>
    <property type="match status" value="1"/>
</dbReference>
<evidence type="ECO:0000250" key="1"/>
<evidence type="ECO:0000250" key="2">
    <source>
        <dbReference type="UniProtKB" id="Q78Y63"/>
    </source>
</evidence>
<evidence type="ECO:0000255" key="3"/>
<evidence type="ECO:0000305" key="4"/>
<comment type="function">
    <text evidence="2">Essential for male fertility, spermiogenesis and acrosome formation.</text>
</comment>
<comment type="subunit">
    <text evidence="2">Interacts with the CCT chaperonin complex and actin.</text>
</comment>
<comment type="subcellular location">
    <subcellularLocation>
        <location evidence="2">Endoplasmic reticulum</location>
    </subcellularLocation>
</comment>
<comment type="similarity">
    <text evidence="4">Belongs to the phosducin family.</text>
</comment>
<proteinExistence type="evidence at transcript level"/>
<accession>Q32LN3</accession>
<protein>
    <recommendedName>
        <fullName>Phosducin-like protein 2</fullName>
    </recommendedName>
</protein>
<gene>
    <name type="primary">PDCL2</name>
</gene>
<organism>
    <name type="scientific">Bos taurus</name>
    <name type="common">Bovine</name>
    <dbReference type="NCBI Taxonomy" id="9913"/>
    <lineage>
        <taxon>Eukaryota</taxon>
        <taxon>Metazoa</taxon>
        <taxon>Chordata</taxon>
        <taxon>Craniata</taxon>
        <taxon>Vertebrata</taxon>
        <taxon>Euteleostomi</taxon>
        <taxon>Mammalia</taxon>
        <taxon>Eutheria</taxon>
        <taxon>Laurasiatheria</taxon>
        <taxon>Artiodactyla</taxon>
        <taxon>Ruminantia</taxon>
        <taxon>Pecora</taxon>
        <taxon>Bovidae</taxon>
        <taxon>Bovinae</taxon>
        <taxon>Bos</taxon>
    </lineage>
</organism>
<keyword id="KW-0221">Differentiation</keyword>
<keyword id="KW-0256">Endoplasmic reticulum</keyword>
<keyword id="KW-1185">Reference proteome</keyword>
<keyword id="KW-0744">Spermatogenesis</keyword>
<sequence length="242" mass="28013">MQDPNEDTEWNEILRDFGILPPKEEPKDEIEEMVLRLQKEAMVKPYEKMTLAELKEAEDEFDDEDMKAIEIYREKRLQEWKALKKKQKFGELREISGNQYVNEVTNAEKDVWVIIHLYRSSIPLCLLVNQHLSLLARKFPETKFVKAIANSCIEHYHDNCLPTIFVYKNGQIEGKFIGIIECGGINLKLEELEWKLAEVGAIQTDLEENPKKAIVDVMVSSIRNTSIYGDSDSSNSDSEDTK</sequence>
<feature type="chain" id="PRO_0000246156" description="Phosducin-like protein 2">
    <location>
        <begin position="1"/>
        <end position="242"/>
    </location>
</feature>
<feature type="domain" description="Phosducin" evidence="3">
    <location>
        <begin position="34"/>
        <end position="201"/>
    </location>
</feature>
<feature type="region of interest" description="Thioredoxin fold" evidence="1">
    <location>
        <begin position="89"/>
        <end position="242"/>
    </location>
</feature>
<name>PDCL2_BOVIN</name>
<reference key="1">
    <citation type="submission" date="2005-11" db="EMBL/GenBank/DDBJ databases">
        <authorList>
            <consortium name="NIH - Mammalian Gene Collection (MGC) project"/>
        </authorList>
    </citation>
    <scope>NUCLEOTIDE SEQUENCE [LARGE SCALE MRNA]</scope>
    <source>
        <strain>Crossbred X Angus</strain>
        <tissue>Liver</tissue>
    </source>
</reference>